<comment type="similarity">
    <text evidence="1">Belongs to the universal ribosomal protein uL29 family.</text>
</comment>
<keyword id="KW-0687">Ribonucleoprotein</keyword>
<keyword id="KW-0689">Ribosomal protein</keyword>
<protein>
    <recommendedName>
        <fullName evidence="1">Large ribosomal subunit protein uL29</fullName>
    </recommendedName>
    <alternativeName>
        <fullName evidence="2">50S ribosomal protein L29</fullName>
    </alternativeName>
</protein>
<evidence type="ECO:0000255" key="1">
    <source>
        <dbReference type="HAMAP-Rule" id="MF_00374"/>
    </source>
</evidence>
<evidence type="ECO:0000305" key="2"/>
<name>RL29_ECOBW</name>
<proteinExistence type="inferred from homology"/>
<sequence>MKAKELREKSVEELNTELLNLLREQFNLRMQAASGQLQQSHLLKQVRRDVARVKTLLNEKAGA</sequence>
<organism>
    <name type="scientific">Escherichia coli (strain K12 / MC4100 / BW2952)</name>
    <dbReference type="NCBI Taxonomy" id="595496"/>
    <lineage>
        <taxon>Bacteria</taxon>
        <taxon>Pseudomonadati</taxon>
        <taxon>Pseudomonadota</taxon>
        <taxon>Gammaproteobacteria</taxon>
        <taxon>Enterobacterales</taxon>
        <taxon>Enterobacteriaceae</taxon>
        <taxon>Escherichia</taxon>
    </lineage>
</organism>
<dbReference type="EMBL" id="CP001396">
    <property type="protein sequence ID" value="ACR61865.1"/>
    <property type="molecule type" value="Genomic_DNA"/>
</dbReference>
<dbReference type="RefSeq" id="WP_000644741.1">
    <property type="nucleotide sequence ID" value="NC_012759.1"/>
</dbReference>
<dbReference type="SMR" id="C4ZUG7"/>
<dbReference type="GeneID" id="93778675"/>
<dbReference type="KEGG" id="ebw:BWG_3003"/>
<dbReference type="HOGENOM" id="CLU_158491_1_2_6"/>
<dbReference type="GO" id="GO:0022625">
    <property type="term" value="C:cytosolic large ribosomal subunit"/>
    <property type="evidence" value="ECO:0007669"/>
    <property type="project" value="TreeGrafter"/>
</dbReference>
<dbReference type="GO" id="GO:0003735">
    <property type="term" value="F:structural constituent of ribosome"/>
    <property type="evidence" value="ECO:0007669"/>
    <property type="project" value="InterPro"/>
</dbReference>
<dbReference type="GO" id="GO:0006412">
    <property type="term" value="P:translation"/>
    <property type="evidence" value="ECO:0007669"/>
    <property type="project" value="UniProtKB-UniRule"/>
</dbReference>
<dbReference type="CDD" id="cd00427">
    <property type="entry name" value="Ribosomal_L29_HIP"/>
    <property type="match status" value="1"/>
</dbReference>
<dbReference type="Gene3D" id="6.10.140.1970">
    <property type="match status" value="1"/>
</dbReference>
<dbReference type="HAMAP" id="MF_00374">
    <property type="entry name" value="Ribosomal_uL29"/>
    <property type="match status" value="1"/>
</dbReference>
<dbReference type="InterPro" id="IPR050063">
    <property type="entry name" value="Ribosomal_protein_uL29"/>
</dbReference>
<dbReference type="InterPro" id="IPR001854">
    <property type="entry name" value="Ribosomal_uL29"/>
</dbReference>
<dbReference type="InterPro" id="IPR018254">
    <property type="entry name" value="Ribosomal_uL29_CS"/>
</dbReference>
<dbReference type="InterPro" id="IPR036049">
    <property type="entry name" value="Ribosomal_uL29_sf"/>
</dbReference>
<dbReference type="NCBIfam" id="TIGR00012">
    <property type="entry name" value="L29"/>
    <property type="match status" value="1"/>
</dbReference>
<dbReference type="PANTHER" id="PTHR10916">
    <property type="entry name" value="60S RIBOSOMAL PROTEIN L35/50S RIBOSOMAL PROTEIN L29"/>
    <property type="match status" value="1"/>
</dbReference>
<dbReference type="PANTHER" id="PTHR10916:SF0">
    <property type="entry name" value="LARGE RIBOSOMAL SUBUNIT PROTEIN UL29C"/>
    <property type="match status" value="1"/>
</dbReference>
<dbReference type="Pfam" id="PF00831">
    <property type="entry name" value="Ribosomal_L29"/>
    <property type="match status" value="1"/>
</dbReference>
<dbReference type="SUPFAM" id="SSF46561">
    <property type="entry name" value="Ribosomal protein L29 (L29p)"/>
    <property type="match status" value="1"/>
</dbReference>
<dbReference type="PROSITE" id="PS00579">
    <property type="entry name" value="RIBOSOMAL_L29"/>
    <property type="match status" value="1"/>
</dbReference>
<feature type="chain" id="PRO_1000205622" description="Large ribosomal subunit protein uL29">
    <location>
        <begin position="1"/>
        <end position="63"/>
    </location>
</feature>
<accession>C4ZUG7</accession>
<reference key="1">
    <citation type="journal article" date="2009" name="J. Bacteriol.">
        <title>Genomic sequencing reveals regulatory mutations and recombinational events in the widely used MC4100 lineage of Escherichia coli K-12.</title>
        <authorList>
            <person name="Ferenci T."/>
            <person name="Zhou Z."/>
            <person name="Betteridge T."/>
            <person name="Ren Y."/>
            <person name="Liu Y."/>
            <person name="Feng L."/>
            <person name="Reeves P.R."/>
            <person name="Wang L."/>
        </authorList>
    </citation>
    <scope>NUCLEOTIDE SEQUENCE [LARGE SCALE GENOMIC DNA]</scope>
    <source>
        <strain>K12 / MC4100 / BW2952</strain>
    </source>
</reference>
<gene>
    <name evidence="1" type="primary">rpmC</name>
    <name type="ordered locus">BWG_3003</name>
</gene>